<accession>Q08AX9</accession>
<protein>
    <recommendedName>
        <fullName evidence="2">SANT and BTB domain regulator of class switch recombination</fullName>
        <shortName>SANT and BTB domain regulator of CSR</shortName>
    </recommendedName>
</protein>
<dbReference type="EMBL" id="BC124960">
    <property type="protein sequence ID" value="AAI24961.1"/>
    <property type="molecule type" value="mRNA"/>
</dbReference>
<dbReference type="RefSeq" id="NP_001121306.1">
    <property type="nucleotide sequence ID" value="NM_001127834.1"/>
</dbReference>
<dbReference type="SMR" id="Q08AX9"/>
<dbReference type="DNASU" id="100158390"/>
<dbReference type="GeneID" id="100158390"/>
<dbReference type="KEGG" id="xla:100158390"/>
<dbReference type="AGR" id="Xenbase:XB-GENE-993257"/>
<dbReference type="CTD" id="100158390"/>
<dbReference type="Xenbase" id="XB-GENE-993257">
    <property type="gene designation" value="sanbr.L"/>
</dbReference>
<dbReference type="OrthoDB" id="550012at2759"/>
<dbReference type="Proteomes" id="UP000186698">
    <property type="component" value="Chromosome 5L"/>
</dbReference>
<dbReference type="Bgee" id="100158390">
    <property type="expression patterns" value="Expressed in egg cell and 13 other cell types or tissues"/>
</dbReference>
<dbReference type="GO" id="GO:0042802">
    <property type="term" value="F:identical protein binding"/>
    <property type="evidence" value="ECO:0000250"/>
    <property type="project" value="UniProtKB"/>
</dbReference>
<dbReference type="GO" id="GO:0045190">
    <property type="term" value="P:isotype switching"/>
    <property type="evidence" value="ECO:0000250"/>
    <property type="project" value="UniProtKB"/>
</dbReference>
<dbReference type="CDD" id="cd14733">
    <property type="entry name" value="BACK"/>
    <property type="match status" value="1"/>
</dbReference>
<dbReference type="Gene3D" id="3.30.710.10">
    <property type="entry name" value="Potassium Channel Kv1.1, Chain A"/>
    <property type="match status" value="1"/>
</dbReference>
<dbReference type="InterPro" id="IPR045902">
    <property type="entry name" value="SANBR-like"/>
</dbReference>
<dbReference type="InterPro" id="IPR021777">
    <property type="entry name" value="SANBR_BTB"/>
</dbReference>
<dbReference type="InterPro" id="IPR011333">
    <property type="entry name" value="SKP1/BTB/POZ_sf"/>
</dbReference>
<dbReference type="PANTHER" id="PTHR20946">
    <property type="entry name" value="SANT AND BTB DOMAIN REGULATOR OF CLASS SWITCH RECOMBINATION"/>
    <property type="match status" value="1"/>
</dbReference>
<dbReference type="PANTHER" id="PTHR20946:SF0">
    <property type="entry name" value="SANT AND BTB DOMAIN REGULATOR OF CLASS SWITCH RECOMBINATION"/>
    <property type="match status" value="1"/>
</dbReference>
<dbReference type="Pfam" id="PF11822">
    <property type="entry name" value="BTB_SANBR"/>
    <property type="match status" value="1"/>
</dbReference>
<organism>
    <name type="scientific">Xenopus laevis</name>
    <name type="common">African clawed frog</name>
    <dbReference type="NCBI Taxonomy" id="8355"/>
    <lineage>
        <taxon>Eukaryota</taxon>
        <taxon>Metazoa</taxon>
        <taxon>Chordata</taxon>
        <taxon>Craniata</taxon>
        <taxon>Vertebrata</taxon>
        <taxon>Euteleostomi</taxon>
        <taxon>Amphibia</taxon>
        <taxon>Batrachia</taxon>
        <taxon>Anura</taxon>
        <taxon>Pipoidea</taxon>
        <taxon>Pipidae</taxon>
        <taxon>Xenopodinae</taxon>
        <taxon>Xenopus</taxon>
        <taxon>Xenopus</taxon>
    </lineage>
</organism>
<feature type="chain" id="PRO_0000324601" description="SANT and BTB domain regulator of class switch recombination">
    <location>
        <begin position="1"/>
        <end position="715"/>
    </location>
</feature>
<feature type="domain" description="SANT" evidence="4">
    <location>
        <begin position="21"/>
        <end position="59"/>
    </location>
</feature>
<feature type="domain" description="BTB" evidence="3">
    <location>
        <begin position="146"/>
        <end position="254"/>
    </location>
</feature>
<feature type="region of interest" description="Disordered" evidence="5">
    <location>
        <begin position="552"/>
        <end position="623"/>
    </location>
</feature>
<feature type="region of interest" description="Disordered" evidence="5">
    <location>
        <begin position="689"/>
        <end position="715"/>
    </location>
</feature>
<feature type="compositionally biased region" description="Acidic residues" evidence="5">
    <location>
        <begin position="552"/>
        <end position="573"/>
    </location>
</feature>
<feature type="compositionally biased region" description="Basic residues" evidence="5">
    <location>
        <begin position="578"/>
        <end position="605"/>
    </location>
</feature>
<feature type="compositionally biased region" description="Polar residues" evidence="5">
    <location>
        <begin position="614"/>
        <end position="623"/>
    </location>
</feature>
<feature type="compositionally biased region" description="Polar residues" evidence="5">
    <location>
        <begin position="690"/>
        <end position="699"/>
    </location>
</feature>
<comment type="function">
    <text evidence="1">Negatively regulates class switch recombination or isotype switching in splenic B-cells.</text>
</comment>
<comment type="subunit">
    <text evidence="1">Homodimer.</text>
</comment>
<comment type="domain">
    <text evidence="1">The BTB domain is important for homodimerization and for its function in negative regulation of class switch recombination.</text>
</comment>
<comment type="similarity">
    <text evidence="6">Belongs to the KIAA1841 family.</text>
</comment>
<name>SANBR_XENLA</name>
<reference key="1">
    <citation type="submission" date="2006-10" db="EMBL/GenBank/DDBJ databases">
        <authorList>
            <consortium name="NIH - Xenopus Gene Collection (XGC) project"/>
        </authorList>
    </citation>
    <scope>NUCLEOTIDE SEQUENCE [LARGE SCALE MRNA]</scope>
    <source>
        <tissue>Embryo</tissue>
    </source>
</reference>
<evidence type="ECO:0000250" key="1">
    <source>
        <dbReference type="UniProtKB" id="Q68FF0"/>
    </source>
</evidence>
<evidence type="ECO:0000250" key="2">
    <source>
        <dbReference type="UniProtKB" id="Q6NSI8"/>
    </source>
</evidence>
<evidence type="ECO:0000255" key="3">
    <source>
        <dbReference type="PROSITE-ProRule" id="PRU00037"/>
    </source>
</evidence>
<evidence type="ECO:0000255" key="4">
    <source>
        <dbReference type="PROSITE-ProRule" id="PRU00624"/>
    </source>
</evidence>
<evidence type="ECO:0000256" key="5">
    <source>
        <dbReference type="SAM" id="MobiDB-lite"/>
    </source>
</evidence>
<evidence type="ECO:0000305" key="6"/>
<sequence>MSHRYSENNNFPYDNNQMVLDMILCSLVGVPQPISWDSVARLVPGYTPKECAKRFEELKSSGTSPVDNQYNPLMATGGIPLESLASYIKSSLLDPVDDQEDVTVGQGTISIIGRPGATTARKCSESDRCSSSLKGDSTTGSQGPNMVIHVCDEAKNLKEDFVCPRDLLVSEMKYFAEYLSTDAQRCEEVDISVHCDVHIFDWLMRYVKRSAPENENQEIPKLEPGNVISILISSEFLKMESLVEECIRYCHKNMSAIVATPCNMNCINANLLTRIANLFTHNEADDVKDKKDKFKSKIFCKKIERLFDAECKNADSPANASTLFRCCLCKRLLTKEAEKKIDCLPGRISIDQHGNIVYLHIRDKSWDVHEYLISLFEELKSWRDVYWRLWGTINWLTCSRCKQSFLCNESSHCQYHPEPAVYPGAASSLDSPGTGIYPCCNQKVLRFDPAQLPKGCKVRDHVVGLPGGGDNMSENPSCNFLSDLLQRRDVIAVPFSKDLNGDSGIVLSEEPSFKCDALLEPNTLYGQKTGEMNAFLSLKNISLQLKQQSLLSEEEDYTTGSEVTEDEVGDEEELSRKQAGRKVKPKRSAKQTKKHISSPSIHKKERQQEKASRDSSPFTVSLQRNKWDASRSLRFNQDAQREDDQRRMTEITGHLIKIRLGDLERVKAKEGKEQAGGIYARLEAQIKASAHSNTRQMNTEKIPRPKPRFGTGRPT</sequence>
<keyword id="KW-1185">Reference proteome</keyword>
<gene>
    <name evidence="2" type="primary">sanbr</name>
</gene>
<proteinExistence type="evidence at transcript level"/>